<feature type="chain" id="PRO_0000268924" description="HTH-type transcriptional regulator IscR">
    <location>
        <begin position="1"/>
        <end position="164"/>
    </location>
</feature>
<feature type="domain" description="HTH rrf2-type" evidence="1">
    <location>
        <begin position="2"/>
        <end position="131"/>
    </location>
</feature>
<feature type="DNA-binding region" description="H-T-H motif" evidence="1">
    <location>
        <begin position="28"/>
        <end position="51"/>
    </location>
</feature>
<feature type="binding site" evidence="1">
    <location>
        <position position="92"/>
    </location>
    <ligand>
        <name>[2Fe-2S] cluster</name>
        <dbReference type="ChEBI" id="CHEBI:190135"/>
    </ligand>
</feature>
<feature type="binding site" evidence="1">
    <location>
        <position position="98"/>
    </location>
    <ligand>
        <name>[2Fe-2S] cluster</name>
        <dbReference type="ChEBI" id="CHEBI:190135"/>
    </ligand>
</feature>
<feature type="binding site" evidence="1">
    <location>
        <position position="104"/>
    </location>
    <ligand>
        <name>[2Fe-2S] cluster</name>
        <dbReference type="ChEBI" id="CHEBI:190135"/>
    </ligand>
</feature>
<keyword id="KW-0001">2Fe-2S</keyword>
<keyword id="KW-0010">Activator</keyword>
<keyword id="KW-0238">DNA-binding</keyword>
<keyword id="KW-0408">Iron</keyword>
<keyword id="KW-0411">Iron-sulfur</keyword>
<keyword id="KW-0479">Metal-binding</keyword>
<keyword id="KW-0678">Repressor</keyword>
<keyword id="KW-0804">Transcription</keyword>
<keyword id="KW-0805">Transcription regulation</keyword>
<protein>
    <recommendedName>
        <fullName evidence="1">HTH-type transcriptional regulator IscR</fullName>
    </recommendedName>
</protein>
<accession>Q8XF25</accession>
<accession>Q7AMI2</accession>
<gene>
    <name evidence="1" type="primary">iscR</name>
    <name type="ordered locus">STY2790</name>
    <name type="ordered locus">t0312</name>
</gene>
<sequence length="164" mass="17391">MRLTSKGRYAVTAMLDVALNSEAGPVPLADISERQGISLSYLEQLFSRLRKNGLVSSVRGPGGGYLLGKDAGSIAVGEVISAVDESVDATRCQGKGGCQGGDKCLTHALWRDLSDRLTGFLNNITLGELVNNQEVLDVSGRQHTHDAPRASGRAQDAIDVKLRA</sequence>
<organism>
    <name type="scientific">Salmonella typhi</name>
    <dbReference type="NCBI Taxonomy" id="90370"/>
    <lineage>
        <taxon>Bacteria</taxon>
        <taxon>Pseudomonadati</taxon>
        <taxon>Pseudomonadota</taxon>
        <taxon>Gammaproteobacteria</taxon>
        <taxon>Enterobacterales</taxon>
        <taxon>Enterobacteriaceae</taxon>
        <taxon>Salmonella</taxon>
    </lineage>
</organism>
<evidence type="ECO:0000255" key="1">
    <source>
        <dbReference type="HAMAP-Rule" id="MF_01176"/>
    </source>
</evidence>
<comment type="function">
    <text evidence="1">Regulates the transcription of several operons and genes involved in the biogenesis of Fe-S clusters and Fe-S-containing proteins.</text>
</comment>
<comment type="cofactor">
    <cofactor evidence="1">
        <name>[2Fe-2S] cluster</name>
        <dbReference type="ChEBI" id="CHEBI:190135"/>
    </cofactor>
    <text evidence="1">Binds 1 [2Fe-2S] cluster.</text>
</comment>
<proteinExistence type="inferred from homology"/>
<name>ISCR_SALTI</name>
<reference key="1">
    <citation type="journal article" date="2003" name="J. Bacteriol.">
        <title>Comparative genomics of Salmonella enterica serovar Typhi strains Ty2 and CT18.</title>
        <authorList>
            <person name="Deng W."/>
            <person name="Liou S.-R."/>
            <person name="Plunkett G. III"/>
            <person name="Mayhew G.F."/>
            <person name="Rose D.J."/>
            <person name="Burland V."/>
            <person name="Kodoyianni V."/>
            <person name="Schwartz D.C."/>
            <person name="Blattner F.R."/>
        </authorList>
    </citation>
    <scope>NUCLEOTIDE SEQUENCE [LARGE SCALE GENOMIC DNA]</scope>
    <source>
        <strain>ATCC 700931 / Ty2</strain>
    </source>
</reference>
<reference key="2">
    <citation type="journal article" date="2001" name="Nature">
        <title>Complete genome sequence of a multiple drug resistant Salmonella enterica serovar Typhi CT18.</title>
        <authorList>
            <person name="Parkhill J."/>
            <person name="Dougan G."/>
            <person name="James K.D."/>
            <person name="Thomson N.R."/>
            <person name="Pickard D."/>
            <person name="Wain J."/>
            <person name="Churcher C.M."/>
            <person name="Mungall K.L."/>
            <person name="Bentley S.D."/>
            <person name="Holden M.T.G."/>
            <person name="Sebaihia M."/>
            <person name="Baker S."/>
            <person name="Basham D."/>
            <person name="Brooks K."/>
            <person name="Chillingworth T."/>
            <person name="Connerton P."/>
            <person name="Cronin A."/>
            <person name="Davis P."/>
            <person name="Davies R.M."/>
            <person name="Dowd L."/>
            <person name="White N."/>
            <person name="Farrar J."/>
            <person name="Feltwell T."/>
            <person name="Hamlin N."/>
            <person name="Haque A."/>
            <person name="Hien T.T."/>
            <person name="Holroyd S."/>
            <person name="Jagels K."/>
            <person name="Krogh A."/>
            <person name="Larsen T.S."/>
            <person name="Leather S."/>
            <person name="Moule S."/>
            <person name="O'Gaora P."/>
            <person name="Parry C."/>
            <person name="Quail M.A."/>
            <person name="Rutherford K.M."/>
            <person name="Simmonds M."/>
            <person name="Skelton J."/>
            <person name="Stevens K."/>
            <person name="Whitehead S."/>
            <person name="Barrell B.G."/>
        </authorList>
    </citation>
    <scope>NUCLEOTIDE SEQUENCE [LARGE SCALE GENOMIC DNA]</scope>
    <source>
        <strain>CT18</strain>
    </source>
</reference>
<dbReference type="EMBL" id="AE014613">
    <property type="protein sequence ID" value="AAO68036.1"/>
    <property type="molecule type" value="Genomic_DNA"/>
</dbReference>
<dbReference type="EMBL" id="AL513382">
    <property type="protein sequence ID" value="CAD02747.1"/>
    <property type="molecule type" value="Genomic_DNA"/>
</dbReference>
<dbReference type="RefSeq" id="NP_457075.1">
    <property type="nucleotide sequence ID" value="NC_003198.1"/>
</dbReference>
<dbReference type="RefSeq" id="WP_001241346.1">
    <property type="nucleotide sequence ID" value="NZ_WSUR01000007.1"/>
</dbReference>
<dbReference type="SMR" id="Q8XF25"/>
<dbReference type="STRING" id="220341.gene:17586681"/>
<dbReference type="KEGG" id="stt:t0312"/>
<dbReference type="KEGG" id="sty:STY2790"/>
<dbReference type="PATRIC" id="fig|220341.7.peg.2836"/>
<dbReference type="eggNOG" id="COG1959">
    <property type="taxonomic scope" value="Bacteria"/>
</dbReference>
<dbReference type="HOGENOM" id="CLU_107144_0_0_6"/>
<dbReference type="OMA" id="RCMTHDL"/>
<dbReference type="OrthoDB" id="9808360at2"/>
<dbReference type="Proteomes" id="UP000000541">
    <property type="component" value="Chromosome"/>
</dbReference>
<dbReference type="Proteomes" id="UP000002670">
    <property type="component" value="Chromosome"/>
</dbReference>
<dbReference type="GO" id="GO:0005829">
    <property type="term" value="C:cytosol"/>
    <property type="evidence" value="ECO:0007669"/>
    <property type="project" value="TreeGrafter"/>
</dbReference>
<dbReference type="GO" id="GO:0051537">
    <property type="term" value="F:2 iron, 2 sulfur cluster binding"/>
    <property type="evidence" value="ECO:0007669"/>
    <property type="project" value="UniProtKB-KW"/>
</dbReference>
<dbReference type="GO" id="GO:0003700">
    <property type="term" value="F:DNA-binding transcription factor activity"/>
    <property type="evidence" value="ECO:0007669"/>
    <property type="project" value="UniProtKB-UniRule"/>
</dbReference>
<dbReference type="GO" id="GO:0003690">
    <property type="term" value="F:double-stranded DNA binding"/>
    <property type="evidence" value="ECO:0007669"/>
    <property type="project" value="UniProtKB-UniRule"/>
</dbReference>
<dbReference type="GO" id="GO:0005506">
    <property type="term" value="F:iron ion binding"/>
    <property type="evidence" value="ECO:0007669"/>
    <property type="project" value="UniProtKB-UniRule"/>
</dbReference>
<dbReference type="FunFam" id="1.10.10.10:FF:000026">
    <property type="entry name" value="HTH-type transcriptional regulator IscR"/>
    <property type="match status" value="1"/>
</dbReference>
<dbReference type="Gene3D" id="1.10.10.10">
    <property type="entry name" value="Winged helix-like DNA-binding domain superfamily/Winged helix DNA-binding domain"/>
    <property type="match status" value="1"/>
</dbReference>
<dbReference type="HAMAP" id="MF_01176">
    <property type="entry name" value="HTH_type_IscR"/>
    <property type="match status" value="1"/>
</dbReference>
<dbReference type="InterPro" id="IPR010242">
    <property type="entry name" value="TF_HTH_IscR"/>
</dbReference>
<dbReference type="InterPro" id="IPR030489">
    <property type="entry name" value="TR_Rrf2-type_CS"/>
</dbReference>
<dbReference type="InterPro" id="IPR000944">
    <property type="entry name" value="Tscrpt_reg_Rrf2"/>
</dbReference>
<dbReference type="InterPro" id="IPR036388">
    <property type="entry name" value="WH-like_DNA-bd_sf"/>
</dbReference>
<dbReference type="InterPro" id="IPR036390">
    <property type="entry name" value="WH_DNA-bd_sf"/>
</dbReference>
<dbReference type="NCBIfam" id="TIGR02010">
    <property type="entry name" value="IscR"/>
    <property type="match status" value="1"/>
</dbReference>
<dbReference type="NCBIfam" id="NF008110">
    <property type="entry name" value="PRK10857.1"/>
    <property type="match status" value="1"/>
</dbReference>
<dbReference type="NCBIfam" id="TIGR00738">
    <property type="entry name" value="rrf2_super"/>
    <property type="match status" value="1"/>
</dbReference>
<dbReference type="PANTHER" id="PTHR33221:SF5">
    <property type="entry name" value="HTH-TYPE TRANSCRIPTIONAL REGULATOR ISCR"/>
    <property type="match status" value="1"/>
</dbReference>
<dbReference type="PANTHER" id="PTHR33221">
    <property type="entry name" value="WINGED HELIX-TURN-HELIX TRANSCRIPTIONAL REGULATOR, RRF2 FAMILY"/>
    <property type="match status" value="1"/>
</dbReference>
<dbReference type="Pfam" id="PF02082">
    <property type="entry name" value="Rrf2"/>
    <property type="match status" value="1"/>
</dbReference>
<dbReference type="SUPFAM" id="SSF46785">
    <property type="entry name" value="Winged helix' DNA-binding domain"/>
    <property type="match status" value="1"/>
</dbReference>
<dbReference type="PROSITE" id="PS01332">
    <property type="entry name" value="HTH_RRF2_1"/>
    <property type="match status" value="1"/>
</dbReference>
<dbReference type="PROSITE" id="PS51197">
    <property type="entry name" value="HTH_RRF2_2"/>
    <property type="match status" value="1"/>
</dbReference>